<evidence type="ECO:0000250" key="1">
    <source>
        <dbReference type="UniProtKB" id="P04798"/>
    </source>
</evidence>
<evidence type="ECO:0000255" key="2"/>
<evidence type="ECO:0000255" key="3">
    <source>
        <dbReference type="PROSITE-ProRule" id="PRU00498"/>
    </source>
</evidence>
<evidence type="ECO:0000269" key="4">
    <source>
    </source>
</evidence>
<evidence type="ECO:0000303" key="5">
    <source>
    </source>
</evidence>
<evidence type="ECO:0000305" key="6"/>
<evidence type="ECO:0000305" key="7">
    <source>
    </source>
</evidence>
<proteinExistence type="inferred from homology"/>
<dbReference type="EC" id="1.-.-.-" evidence="7"/>
<dbReference type="EMBL" id="KP737857">
    <property type="protein sequence ID" value="AKC54420.1"/>
    <property type="molecule type" value="Genomic_DNA"/>
</dbReference>
<dbReference type="EMBL" id="AZHB01000034">
    <property type="protein sequence ID" value="OAA53532.1"/>
    <property type="molecule type" value="Genomic_DNA"/>
</dbReference>
<dbReference type="RefSeq" id="XP_018700483.1">
    <property type="nucleotide sequence ID" value="XM_018852296.1"/>
</dbReference>
<dbReference type="SMR" id="A0A167LUS5"/>
<dbReference type="STRING" id="1081104.A0A167LUS5"/>
<dbReference type="GlyCosmos" id="A0A167LUS5">
    <property type="glycosylation" value="4 sites, No reported glycans"/>
</dbReference>
<dbReference type="GeneID" id="30024985"/>
<dbReference type="OrthoDB" id="1470350at2759"/>
<dbReference type="Proteomes" id="UP000076744">
    <property type="component" value="Unassembled WGS sequence"/>
</dbReference>
<dbReference type="GO" id="GO:0016020">
    <property type="term" value="C:membrane"/>
    <property type="evidence" value="ECO:0007669"/>
    <property type="project" value="UniProtKB-SubCell"/>
</dbReference>
<dbReference type="GO" id="GO:0020037">
    <property type="term" value="F:heme binding"/>
    <property type="evidence" value="ECO:0007669"/>
    <property type="project" value="InterPro"/>
</dbReference>
<dbReference type="GO" id="GO:0005506">
    <property type="term" value="F:iron ion binding"/>
    <property type="evidence" value="ECO:0007669"/>
    <property type="project" value="InterPro"/>
</dbReference>
<dbReference type="GO" id="GO:0016712">
    <property type="term" value="F:oxidoreductase activity, acting on paired donors, with incorporation or reduction of molecular oxygen, reduced flavin or flavoprotein as one donor, and incorporation of one atom of oxygen"/>
    <property type="evidence" value="ECO:0007669"/>
    <property type="project" value="InterPro"/>
</dbReference>
<dbReference type="Gene3D" id="1.10.630.10">
    <property type="entry name" value="Cytochrome P450"/>
    <property type="match status" value="1"/>
</dbReference>
<dbReference type="InterPro" id="IPR001128">
    <property type="entry name" value="Cyt_P450"/>
</dbReference>
<dbReference type="InterPro" id="IPR002974">
    <property type="entry name" value="Cyt_P450_E_CYP52_ascomycetes"/>
</dbReference>
<dbReference type="InterPro" id="IPR047146">
    <property type="entry name" value="Cyt_P450_E_CYP52_fungi"/>
</dbReference>
<dbReference type="InterPro" id="IPR036396">
    <property type="entry name" value="Cyt_P450_sf"/>
</dbReference>
<dbReference type="PANTHER" id="PTHR24287:SF18">
    <property type="entry name" value="CYTOCHROME P450 MONOOXYGENASE APDE-RELATED"/>
    <property type="match status" value="1"/>
</dbReference>
<dbReference type="PANTHER" id="PTHR24287">
    <property type="entry name" value="P450, PUTATIVE (EUROFUNG)-RELATED"/>
    <property type="match status" value="1"/>
</dbReference>
<dbReference type="Pfam" id="PF00067">
    <property type="entry name" value="p450"/>
    <property type="match status" value="1"/>
</dbReference>
<dbReference type="PRINTS" id="PR01239">
    <property type="entry name" value="EP450IICYP52"/>
</dbReference>
<dbReference type="SUPFAM" id="SSF48264">
    <property type="entry name" value="Cytochrome P450"/>
    <property type="match status" value="1"/>
</dbReference>
<keyword id="KW-0325">Glycoprotein</keyword>
<keyword id="KW-0349">Heme</keyword>
<keyword id="KW-0408">Iron</keyword>
<keyword id="KW-0472">Membrane</keyword>
<keyword id="KW-0479">Metal-binding</keyword>
<keyword id="KW-0503">Monooxygenase</keyword>
<keyword id="KW-0560">Oxidoreductase</keyword>
<keyword id="KW-1185">Reference proteome</keyword>
<keyword id="KW-0812">Transmembrane</keyword>
<keyword id="KW-1133">Transmembrane helix</keyword>
<comment type="function">
    <text evidence="4 6 7">Cytochrome P450 monooxygenase; part of the gene cluster that mediates the biosynthesis of fumosorinone, a 2-pyridone alkaloid that acts as an inhibitor of protein tyrosine phosphatase 1B which is implicated asa negative regulator of insulin receptor signaling and a potential drug target for the treatment of type II diabetes and other associated metabolic syndromes (PubMed:25857260). The polyketide-amino acid backbone of fumosorinone is first assembled by the PKS-NRPS hybrid fumoS (PubMed:25857260). The PKS modules condense one acetyl-CoA starter unit with 7 malonyl-CoA units, programmed C-methylations occurring after the first 3 and the sixth extensions, and cycles of full reduction occurring after the first 2 extensions (Probable). Because fumoS lacks a designated enoyl reductase (ER) domain, the required activity is provided the enoyl reductase fumoC (Probable). Upon formation of the polyketide backbone on the thiotemplate, the polyketide is transferred to the NRPS module and linked to tyrosine to produce the acyltetramic acid intermediate called prefumosorinone A (Probable). The cytochrome P450 monooxygenase fumoA then probably catalyzes an unprecedented oxidative ring expansion of prefumosorinone A to form prefumosorinone B which contains the 2-pyridone core of fumosorinone (Probable). The cytochrome P450 monooxygenase fumoB might hydroxylate the nitrogen of prefumosorinone B, but not the acyltetramic acid prefumosorinone A, to form fumosorinone (Probable).</text>
</comment>
<comment type="cofactor">
    <cofactor evidence="1">
        <name>heme</name>
        <dbReference type="ChEBI" id="CHEBI:30413"/>
    </cofactor>
</comment>
<comment type="pathway">
    <text evidence="4">Secondary metabolite biosynthesis.</text>
</comment>
<comment type="subcellular location">
    <subcellularLocation>
        <location evidence="2">Membrane</location>
        <topology evidence="2">Single-pass membrane protein</topology>
    </subcellularLocation>
</comment>
<comment type="similarity">
    <text evidence="6">Belongs to the cytochrome P450 family.</text>
</comment>
<reference key="1">
    <citation type="journal article" date="2015" name="Fungal Genet. Biol.">
        <title>Structure and biosynthesis of fumosorinone, a new protein tyrosine phosphatase 1B inhibitor firstly isolated from the entomogenous fungus Isaria fumosorosea.</title>
        <authorList>
            <person name="Liu L."/>
            <person name="Zhang J."/>
            <person name="Chen C."/>
            <person name="Teng J."/>
            <person name="Wang C."/>
            <person name="Luo D."/>
        </authorList>
    </citation>
    <scope>NUCLEOTIDE SEQUENCE [GENOMIC DNA]</scope>
    <scope>FUNCTION</scope>
    <scope>PATHWAY</scope>
    <source>
        <strain>ARSEF 2679</strain>
    </source>
</reference>
<reference key="2">
    <citation type="journal article" date="2016" name="Genome Biol. Evol.">
        <title>Divergent and convergent evolution of fungal pathogenicity.</title>
        <authorList>
            <person name="Shang Y."/>
            <person name="Xiao G."/>
            <person name="Zheng P."/>
            <person name="Cen K."/>
            <person name="Zhan S."/>
            <person name="Wang C."/>
        </authorList>
    </citation>
    <scope>NUCLEOTIDE SEQUENCE [LARGE SCALE GENOMIC DNA]</scope>
    <source>
        <strain>ARSEF 2679</strain>
    </source>
</reference>
<name>FUMOA_CORFA</name>
<accession>A0A167LUS5</accession>
<accession>A0A0E3U216</accession>
<organism>
    <name type="scientific">Cordyceps fumosorosea (strain ARSEF 2679)</name>
    <name type="common">Isaria fumosorosea</name>
    <dbReference type="NCBI Taxonomy" id="1081104"/>
    <lineage>
        <taxon>Eukaryota</taxon>
        <taxon>Fungi</taxon>
        <taxon>Dikarya</taxon>
        <taxon>Ascomycota</taxon>
        <taxon>Pezizomycotina</taxon>
        <taxon>Sordariomycetes</taxon>
        <taxon>Hypocreomycetidae</taxon>
        <taxon>Hypocreales</taxon>
        <taxon>Cordycipitaceae</taxon>
        <taxon>Cordyceps</taxon>
    </lineage>
</organism>
<protein>
    <recommendedName>
        <fullName evidence="5">Cytochrome P450 monooxygenase fumoA</fullName>
        <ecNumber evidence="7">1.-.-.-</ecNumber>
    </recommendedName>
    <alternativeName>
        <fullName evidence="5">Fumosorinone biosynthesis cluster protein A</fullName>
    </alternativeName>
</protein>
<feature type="chain" id="PRO_0000451333" description="Cytochrome P450 monooxygenase fumoA">
    <location>
        <begin position="1"/>
        <end position="509"/>
    </location>
</feature>
<feature type="transmembrane region" description="Helical" evidence="2">
    <location>
        <begin position="5"/>
        <end position="27"/>
    </location>
</feature>
<feature type="binding site" description="axial binding residue" evidence="1">
    <location>
        <position position="456"/>
    </location>
    <ligand>
        <name>heme</name>
        <dbReference type="ChEBI" id="CHEBI:30413"/>
    </ligand>
    <ligandPart>
        <name>Fe</name>
        <dbReference type="ChEBI" id="CHEBI:18248"/>
    </ligandPart>
</feature>
<feature type="glycosylation site" description="N-linked (GlcNAc...) asparagine" evidence="3">
    <location>
        <position position="317"/>
    </location>
</feature>
<feature type="glycosylation site" description="N-linked (GlcNAc...) asparagine" evidence="3">
    <location>
        <position position="369"/>
    </location>
</feature>
<feature type="glycosylation site" description="N-linked (GlcNAc...) asparagine" evidence="3">
    <location>
        <position position="378"/>
    </location>
</feature>
<feature type="glycosylation site" description="N-linked (GlcNAc...) asparagine" evidence="3">
    <location>
        <position position="464"/>
    </location>
</feature>
<gene>
    <name evidence="5" type="primary">fumoA</name>
    <name type="ORF">ISF_08693</name>
</gene>
<sequence length="509" mass="58931">MVATLANLNFPYLILSACLSAILLSRFLPFTRRDRRPTAKGCLPEPRVFQWDVFFGLDIPISQGRALQQNRYLEWLRDLHASMPRTKTFSVNFGGYRWIYSIEPEILKAVYATNFQDFGVEPIRQHPPGFKPFAEKGVSTSDGEDWAFSRSLIKPFFERSVYVSTDRVKPFADKFLTFIPEDGETFDIQPLLQRWFLDMTSEFIFGKSQDSMTHPERAEVIWAMADVLRGTRLRAQTYKILWAFNWDWWFKAIEKVHGFLNPYIRSTLAELAERQQRVKEGLPVGEERTDLLWSMATMLPEEEALRSQVCIIFVPNNDTTSIFIAHCLYFLARHPDAWRKLREEVTAVGDAPITFELLRNMKYLNGIMNETHRLIPNNVTQIRSALSDVVLPLGGGPDGKAPLDVRKGDIVSVTKTVMYRDPDRWGADADEYRPERWDGMRGGWHFLPYGGGPRRCPAQMMVQNESGYMLCRLARRYARIEARDKEPYRARMRIGPSSLHGVKIAFYKE</sequence>